<evidence type="ECO:0000255" key="1"/>
<evidence type="ECO:0000269" key="2">
    <source>
    </source>
</evidence>
<evidence type="ECO:0000305" key="3"/>
<keyword id="KW-1003">Cell membrane</keyword>
<keyword id="KW-0472">Membrane</keyword>
<keyword id="KW-1185">Reference proteome</keyword>
<keyword id="KW-0812">Transmembrane</keyword>
<keyword id="KW-1133">Transmembrane helix</keyword>
<comment type="subcellular location">
    <subcellularLocation>
        <location evidence="3">Cell membrane</location>
        <topology evidence="3">Multi-pass membrane protein</topology>
    </subcellularLocation>
</comment>
<comment type="induction">
    <text evidence="2">A member of the dormancy regulon. Induced in response to reduced oxygen tension (hypoxia) and low levels of nitric oxide (NO).</text>
</comment>
<reference key="1">
    <citation type="journal article" date="2002" name="J. Bacteriol.">
        <title>Whole-genome comparison of Mycobacterium tuberculosis clinical and laboratory strains.</title>
        <authorList>
            <person name="Fleischmann R.D."/>
            <person name="Alland D."/>
            <person name="Eisen J.A."/>
            <person name="Carpenter L."/>
            <person name="White O."/>
            <person name="Peterson J.D."/>
            <person name="DeBoy R.T."/>
            <person name="Dodson R.J."/>
            <person name="Gwinn M.L."/>
            <person name="Haft D.H."/>
            <person name="Hickey E.K."/>
            <person name="Kolonay J.F."/>
            <person name="Nelson W.C."/>
            <person name="Umayam L.A."/>
            <person name="Ermolaeva M.D."/>
            <person name="Salzberg S.L."/>
            <person name="Delcher A."/>
            <person name="Utterback T.R."/>
            <person name="Weidman J.F."/>
            <person name="Khouri H.M."/>
            <person name="Gill J."/>
            <person name="Mikula A."/>
            <person name="Bishai W."/>
            <person name="Jacobs W.R. Jr."/>
            <person name="Venter J.C."/>
            <person name="Fraser C.M."/>
        </authorList>
    </citation>
    <scope>NUCLEOTIDE SEQUENCE [LARGE SCALE GENOMIC DNA]</scope>
    <source>
        <strain>CDC 1551 / Oshkosh</strain>
    </source>
</reference>
<reference key="2">
    <citation type="journal article" date="2003" name="J. Exp. Med.">
        <title>Inhibition of respiration by nitric oxide induces a Mycobacterium tuberculosis dormancy program.</title>
        <authorList>
            <person name="Voskuil M.I."/>
            <person name="Schnappinger D."/>
            <person name="Visconti K.C."/>
            <person name="Harrell M.I."/>
            <person name="Dolganov G.M."/>
            <person name="Sherman D.R."/>
            <person name="Schoolnik G.K."/>
        </authorList>
    </citation>
    <scope>INDUCTION BY NITRIC OXIDE (NO) AND BY HYPOXIA</scope>
    <scope>DORMANCY REGULON</scope>
    <source>
        <strain>CDC 1551 / Oshkosh</strain>
    </source>
</reference>
<protein>
    <recommendedName>
        <fullName>Uncharacterized membrane protein MT1776</fullName>
    </recommendedName>
</protein>
<proteinExistence type="evidence at transcript level"/>
<sequence length="197" mass="21357">MFLYVAVGSLVVARLLLYPLRPADLTPPYWVAMGATAITVLAGAHIVEMADAPMAIVTSGLVAGASVVFWAFGPWLIPPLVAASIWKHVVHRVPLRYEATLWSVVFPLGMYGVGAYRLGLAAHLPIVESIGEFEGWVALAVWTITFVAMLHHLAATIGRSGRSSHAIGAADDTHAIICRPPRSFDHQVRAFRRNQPM</sequence>
<dbReference type="EMBL" id="AE000516">
    <property type="protein sequence ID" value="AAK46049.1"/>
    <property type="molecule type" value="Genomic_DNA"/>
</dbReference>
<dbReference type="PIR" id="B70688">
    <property type="entry name" value="B70688"/>
</dbReference>
<dbReference type="RefSeq" id="WP_003898991.1">
    <property type="nucleotide sequence ID" value="NZ_KK341227.1"/>
</dbReference>
<dbReference type="KEGG" id="mtc:MT1776"/>
<dbReference type="HOGENOM" id="CLU_1609026_0_0_11"/>
<dbReference type="Proteomes" id="UP000001020">
    <property type="component" value="Chromosome"/>
</dbReference>
<dbReference type="GO" id="GO:0005886">
    <property type="term" value="C:plasma membrane"/>
    <property type="evidence" value="ECO:0007669"/>
    <property type="project" value="UniProtKB-SubCell"/>
</dbReference>
<dbReference type="GO" id="GO:0055085">
    <property type="term" value="P:transmembrane transport"/>
    <property type="evidence" value="ECO:0007669"/>
    <property type="project" value="InterPro"/>
</dbReference>
<dbReference type="CDD" id="cd09319">
    <property type="entry name" value="TDT_like_1"/>
    <property type="match status" value="1"/>
</dbReference>
<dbReference type="Gene3D" id="1.50.10.150">
    <property type="entry name" value="Voltage-dependent anion channel"/>
    <property type="match status" value="1"/>
</dbReference>
<dbReference type="InterPro" id="IPR004695">
    <property type="entry name" value="SLAC1/Mae1/Ssu1/TehA"/>
</dbReference>
<dbReference type="InterPro" id="IPR038665">
    <property type="entry name" value="Voltage-dep_anion_channel_sf"/>
</dbReference>
<dbReference type="Pfam" id="PF03595">
    <property type="entry name" value="SLAC1"/>
    <property type="match status" value="1"/>
</dbReference>
<feature type="chain" id="PRO_0000427428" description="Uncharacterized membrane protein MT1776">
    <location>
        <begin position="1"/>
        <end position="197"/>
    </location>
</feature>
<feature type="transmembrane region" description="Helical" evidence="1">
    <location>
        <begin position="30"/>
        <end position="50"/>
    </location>
</feature>
<feature type="transmembrane region" description="Helical" evidence="1">
    <location>
        <begin position="61"/>
        <end position="81"/>
    </location>
</feature>
<feature type="transmembrane region" description="Helical" evidence="1">
    <location>
        <begin position="101"/>
        <end position="121"/>
    </location>
</feature>
<feature type="transmembrane region" description="Helical" evidence="1">
    <location>
        <begin position="130"/>
        <end position="150"/>
    </location>
</feature>
<name>Y1735_MYCTO</name>
<gene>
    <name type="ordered locus">MT1776</name>
</gene>
<organism>
    <name type="scientific">Mycobacterium tuberculosis (strain CDC 1551 / Oshkosh)</name>
    <dbReference type="NCBI Taxonomy" id="83331"/>
    <lineage>
        <taxon>Bacteria</taxon>
        <taxon>Bacillati</taxon>
        <taxon>Actinomycetota</taxon>
        <taxon>Actinomycetes</taxon>
        <taxon>Mycobacteriales</taxon>
        <taxon>Mycobacteriaceae</taxon>
        <taxon>Mycobacterium</taxon>
        <taxon>Mycobacterium tuberculosis complex</taxon>
    </lineage>
</organism>
<accession>P9WLS4</accession>
<accession>L0T7I8</accession>
<accession>P71993</accession>
<accession>Q7D822</accession>